<gene>
    <name evidence="1" type="primary">ureC</name>
    <name type="ordered locus">BMA10229_A2557</name>
</gene>
<proteinExistence type="inferred from homology"/>
<comment type="catalytic activity">
    <reaction evidence="1">
        <text>urea + 2 H2O + H(+) = hydrogencarbonate + 2 NH4(+)</text>
        <dbReference type="Rhea" id="RHEA:20557"/>
        <dbReference type="ChEBI" id="CHEBI:15377"/>
        <dbReference type="ChEBI" id="CHEBI:15378"/>
        <dbReference type="ChEBI" id="CHEBI:16199"/>
        <dbReference type="ChEBI" id="CHEBI:17544"/>
        <dbReference type="ChEBI" id="CHEBI:28938"/>
        <dbReference type="EC" id="3.5.1.5"/>
    </reaction>
</comment>
<comment type="cofactor">
    <cofactor evidence="1">
        <name>Ni cation</name>
        <dbReference type="ChEBI" id="CHEBI:25516"/>
    </cofactor>
    <text evidence="1">Binds 2 nickel ions per subunit.</text>
</comment>
<comment type="pathway">
    <text evidence="1">Nitrogen metabolism; urea degradation; CO(2) and NH(3) from urea (urease route): step 1/1.</text>
</comment>
<comment type="subunit">
    <text evidence="1">Heterotrimer of UreA (gamma), UreB (beta) and UreC (alpha) subunits. Three heterotrimers associate to form the active enzyme.</text>
</comment>
<comment type="subcellular location">
    <subcellularLocation>
        <location evidence="1">Cytoplasm</location>
    </subcellularLocation>
</comment>
<comment type="PTM">
    <text evidence="1">Carboxylation allows a single lysine to coordinate two nickel ions.</text>
</comment>
<comment type="similarity">
    <text evidence="1">Belongs to the metallo-dependent hydrolases superfamily. Urease alpha subunit family.</text>
</comment>
<name>URE1_BURM9</name>
<evidence type="ECO:0000255" key="1">
    <source>
        <dbReference type="HAMAP-Rule" id="MF_01953"/>
    </source>
</evidence>
<dbReference type="EC" id="3.5.1.5" evidence="1"/>
<dbReference type="EMBL" id="CP000546">
    <property type="protein sequence ID" value="ABN01085.1"/>
    <property type="molecule type" value="Genomic_DNA"/>
</dbReference>
<dbReference type="RefSeq" id="WP_004186033.1">
    <property type="nucleotide sequence ID" value="NC_008836.1"/>
</dbReference>
<dbReference type="SMR" id="A2S996"/>
<dbReference type="MEROPS" id="M38.982"/>
<dbReference type="GeneID" id="92979887"/>
<dbReference type="KEGG" id="bml:BMA10229_A2557"/>
<dbReference type="HOGENOM" id="CLU_000980_0_0_4"/>
<dbReference type="UniPathway" id="UPA00258">
    <property type="reaction ID" value="UER00370"/>
</dbReference>
<dbReference type="Proteomes" id="UP000002283">
    <property type="component" value="Chromosome I"/>
</dbReference>
<dbReference type="GO" id="GO:0005737">
    <property type="term" value="C:cytoplasm"/>
    <property type="evidence" value="ECO:0007669"/>
    <property type="project" value="UniProtKB-SubCell"/>
</dbReference>
<dbReference type="GO" id="GO:0016151">
    <property type="term" value="F:nickel cation binding"/>
    <property type="evidence" value="ECO:0007669"/>
    <property type="project" value="UniProtKB-UniRule"/>
</dbReference>
<dbReference type="GO" id="GO:0009039">
    <property type="term" value="F:urease activity"/>
    <property type="evidence" value="ECO:0007669"/>
    <property type="project" value="UniProtKB-UniRule"/>
</dbReference>
<dbReference type="GO" id="GO:0043419">
    <property type="term" value="P:urea catabolic process"/>
    <property type="evidence" value="ECO:0007669"/>
    <property type="project" value="UniProtKB-UniRule"/>
</dbReference>
<dbReference type="CDD" id="cd00375">
    <property type="entry name" value="Urease_alpha"/>
    <property type="match status" value="1"/>
</dbReference>
<dbReference type="Gene3D" id="3.20.20.140">
    <property type="entry name" value="Metal-dependent hydrolases"/>
    <property type="match status" value="1"/>
</dbReference>
<dbReference type="Gene3D" id="2.30.40.10">
    <property type="entry name" value="Urease, subunit C, domain 1"/>
    <property type="match status" value="1"/>
</dbReference>
<dbReference type="HAMAP" id="MF_01953">
    <property type="entry name" value="Urease_alpha"/>
    <property type="match status" value="1"/>
</dbReference>
<dbReference type="InterPro" id="IPR006680">
    <property type="entry name" value="Amidohydro-rel"/>
</dbReference>
<dbReference type="InterPro" id="IPR011059">
    <property type="entry name" value="Metal-dep_hydrolase_composite"/>
</dbReference>
<dbReference type="InterPro" id="IPR032466">
    <property type="entry name" value="Metal_Hydrolase"/>
</dbReference>
<dbReference type="InterPro" id="IPR011612">
    <property type="entry name" value="Urease_alpha_N_dom"/>
</dbReference>
<dbReference type="InterPro" id="IPR050112">
    <property type="entry name" value="Urease_alpha_subunit"/>
</dbReference>
<dbReference type="InterPro" id="IPR017950">
    <property type="entry name" value="Urease_AS"/>
</dbReference>
<dbReference type="InterPro" id="IPR005848">
    <property type="entry name" value="Urease_asu"/>
</dbReference>
<dbReference type="InterPro" id="IPR017951">
    <property type="entry name" value="Urease_asu_c"/>
</dbReference>
<dbReference type="InterPro" id="IPR029754">
    <property type="entry name" value="Urease_Ni-bd"/>
</dbReference>
<dbReference type="NCBIfam" id="NF009685">
    <property type="entry name" value="PRK13206.1"/>
    <property type="match status" value="1"/>
</dbReference>
<dbReference type="NCBIfam" id="NF009686">
    <property type="entry name" value="PRK13207.1"/>
    <property type="match status" value="1"/>
</dbReference>
<dbReference type="NCBIfam" id="TIGR01792">
    <property type="entry name" value="urease_alph"/>
    <property type="match status" value="1"/>
</dbReference>
<dbReference type="PANTHER" id="PTHR43440">
    <property type="entry name" value="UREASE"/>
    <property type="match status" value="1"/>
</dbReference>
<dbReference type="PANTHER" id="PTHR43440:SF1">
    <property type="entry name" value="UREASE"/>
    <property type="match status" value="1"/>
</dbReference>
<dbReference type="Pfam" id="PF01979">
    <property type="entry name" value="Amidohydro_1"/>
    <property type="match status" value="1"/>
</dbReference>
<dbReference type="Pfam" id="PF00449">
    <property type="entry name" value="Urease_alpha"/>
    <property type="match status" value="1"/>
</dbReference>
<dbReference type="PRINTS" id="PR01752">
    <property type="entry name" value="UREASE"/>
</dbReference>
<dbReference type="SUPFAM" id="SSF51338">
    <property type="entry name" value="Composite domain of metallo-dependent hydrolases"/>
    <property type="match status" value="2"/>
</dbReference>
<dbReference type="SUPFAM" id="SSF51556">
    <property type="entry name" value="Metallo-dependent hydrolases"/>
    <property type="match status" value="1"/>
</dbReference>
<dbReference type="PROSITE" id="PS01120">
    <property type="entry name" value="UREASE_1"/>
    <property type="match status" value="1"/>
</dbReference>
<dbReference type="PROSITE" id="PS00145">
    <property type="entry name" value="UREASE_2"/>
    <property type="match status" value="1"/>
</dbReference>
<dbReference type="PROSITE" id="PS51368">
    <property type="entry name" value="UREASE_3"/>
    <property type="match status" value="1"/>
</dbReference>
<protein>
    <recommendedName>
        <fullName evidence="1">Urease subunit alpha</fullName>
        <ecNumber evidence="1">3.5.1.5</ecNumber>
    </recommendedName>
    <alternativeName>
        <fullName evidence="1">Urea amidohydrolase subunit alpha</fullName>
    </alternativeName>
</protein>
<keyword id="KW-0963">Cytoplasm</keyword>
<keyword id="KW-0378">Hydrolase</keyword>
<keyword id="KW-0479">Metal-binding</keyword>
<keyword id="KW-0533">Nickel</keyword>
<sequence length="568" mass="60662">MTLRLSRRAYAEMYGPTTGDRIRLADTELLIEVERDHTLYGEEVKFGGGKVIRDGMGQSQLPAADVADTVITNAVILDHWGIVKADIAIKHGRIAAIGKAGNPDIQPGVTIAIGAATEIIAGEGLIVTAGGIDTHIHFISPQQIDEALASGVTTMIGGGTGPATGTNATTCTPGPWHMERMLQAADGWPINLGFLGKGNASRPQPLVEQIEAGAIGLKLHEDWGTTPAAIDNCLTVADDTDTQVAIHTDTLNEAGFVEATVAAFKGRTIHTYHTEGAGGGHAPDILKVCGEANVLPSSTNPTRPYTINTLDEHLDMLMVCHHLDPSIAEDLAFAESRIRRETIAAEDILHDLGALSMLSSDSQAMGRVGEVIIRTWQTAHKMKVQRGALAGDGARNDNFRAKRYVAKYTINPALTHGIAHEVGSIEPGKWADLVLWEPAFFGVKPAMIVKGGMIAVAQMGDPNASIPTPQPVHYREMFATRGGALARTSLTFVSQLALDAGIGARYGLAKRLVPVRGCRTVTKRDMIHNAWQPAIRVDPETYDVVADGALLTCEPAAVLPMAQRYFLF</sequence>
<accession>A2S996</accession>
<feature type="chain" id="PRO_1000070650" description="Urease subunit alpha">
    <location>
        <begin position="1"/>
        <end position="568"/>
    </location>
</feature>
<feature type="domain" description="Urease" evidence="1">
    <location>
        <begin position="130"/>
        <end position="568"/>
    </location>
</feature>
<feature type="active site" description="Proton donor" evidence="1">
    <location>
        <position position="321"/>
    </location>
</feature>
<feature type="binding site" evidence="1">
    <location>
        <position position="135"/>
    </location>
    <ligand>
        <name>Ni(2+)</name>
        <dbReference type="ChEBI" id="CHEBI:49786"/>
        <label>1</label>
    </ligand>
</feature>
<feature type="binding site" evidence="1">
    <location>
        <position position="137"/>
    </location>
    <ligand>
        <name>Ni(2+)</name>
        <dbReference type="ChEBI" id="CHEBI:49786"/>
        <label>1</label>
    </ligand>
</feature>
<feature type="binding site" description="via carbamate group" evidence="1">
    <location>
        <position position="218"/>
    </location>
    <ligand>
        <name>Ni(2+)</name>
        <dbReference type="ChEBI" id="CHEBI:49786"/>
        <label>1</label>
    </ligand>
</feature>
<feature type="binding site" description="via carbamate group" evidence="1">
    <location>
        <position position="218"/>
    </location>
    <ligand>
        <name>Ni(2+)</name>
        <dbReference type="ChEBI" id="CHEBI:49786"/>
        <label>2</label>
    </ligand>
</feature>
<feature type="binding site" evidence="1">
    <location>
        <position position="220"/>
    </location>
    <ligand>
        <name>substrate</name>
    </ligand>
</feature>
<feature type="binding site" evidence="1">
    <location>
        <position position="247"/>
    </location>
    <ligand>
        <name>Ni(2+)</name>
        <dbReference type="ChEBI" id="CHEBI:49786"/>
        <label>2</label>
    </ligand>
</feature>
<feature type="binding site" evidence="1">
    <location>
        <position position="273"/>
    </location>
    <ligand>
        <name>Ni(2+)</name>
        <dbReference type="ChEBI" id="CHEBI:49786"/>
        <label>2</label>
    </ligand>
</feature>
<feature type="binding site" evidence="1">
    <location>
        <position position="361"/>
    </location>
    <ligand>
        <name>Ni(2+)</name>
        <dbReference type="ChEBI" id="CHEBI:49786"/>
        <label>1</label>
    </ligand>
</feature>
<feature type="modified residue" description="N6-carboxylysine" evidence="1">
    <location>
        <position position="218"/>
    </location>
</feature>
<reference key="1">
    <citation type="journal article" date="2010" name="Genome Biol. Evol.">
        <title>Continuing evolution of Burkholderia mallei through genome reduction and large-scale rearrangements.</title>
        <authorList>
            <person name="Losada L."/>
            <person name="Ronning C.M."/>
            <person name="DeShazer D."/>
            <person name="Woods D."/>
            <person name="Fedorova N."/>
            <person name="Kim H.S."/>
            <person name="Shabalina S.A."/>
            <person name="Pearson T.R."/>
            <person name="Brinkac L."/>
            <person name="Tan P."/>
            <person name="Nandi T."/>
            <person name="Crabtree J."/>
            <person name="Badger J."/>
            <person name="Beckstrom-Sternberg S."/>
            <person name="Saqib M."/>
            <person name="Schutzer S.E."/>
            <person name="Keim P."/>
            <person name="Nierman W.C."/>
        </authorList>
    </citation>
    <scope>NUCLEOTIDE SEQUENCE [LARGE SCALE GENOMIC DNA]</scope>
    <source>
        <strain>NCTC 10229</strain>
    </source>
</reference>
<organism>
    <name type="scientific">Burkholderia mallei (strain NCTC 10229)</name>
    <dbReference type="NCBI Taxonomy" id="412022"/>
    <lineage>
        <taxon>Bacteria</taxon>
        <taxon>Pseudomonadati</taxon>
        <taxon>Pseudomonadota</taxon>
        <taxon>Betaproteobacteria</taxon>
        <taxon>Burkholderiales</taxon>
        <taxon>Burkholderiaceae</taxon>
        <taxon>Burkholderia</taxon>
        <taxon>pseudomallei group</taxon>
    </lineage>
</organism>